<name>TYPH_SHEWM</name>
<gene>
    <name evidence="1" type="primary">deoA</name>
    <name type="ordered locus">Swoo_3548</name>
</gene>
<evidence type="ECO:0000255" key="1">
    <source>
        <dbReference type="HAMAP-Rule" id="MF_01628"/>
    </source>
</evidence>
<sequence>MFLAQEIIRKKRNAEALSKEEIQFFVKGITDNTVSEGQIAALGMAVYFNDMNMDERIALTTSMRDSGTVLDWQSLDLNGPIIDKHSTGGVGDVISLMLGPMAAACGGYVPMISGRGLGHTGGTLDKFDAIPGYQTEPDSALFRKVVKEAGVAIIGQTGDLVPADKRFYSIRDNTATVESISLITASILSKKLAAGLDALAMDVKVGSGAFMPTYEASEELARSITAVANGAGTKTTALLTDMNQVLASCAGNAVEVKEAIDFLTGRYRNPRLYEVTMGLCAEMLMLGGIASTETQAREKLNAVLDNGKAAEIFGRMISGLGGPTDFVENPGLYLPESKIIRPVYAEQTGFATSMDTRELGLAVVTLGGGRRKPGDALDYSVGLTQVCALGDEISKDKPIAMIHAQTETAFAEAERAVRKAIHIGDSRPEKTPEIYRYIRASDL</sequence>
<protein>
    <recommendedName>
        <fullName evidence="1">Thymidine phosphorylase</fullName>
        <ecNumber evidence="1">2.4.2.4</ecNumber>
    </recommendedName>
    <alternativeName>
        <fullName evidence="1">TdRPase</fullName>
    </alternativeName>
</protein>
<organism>
    <name type="scientific">Shewanella woodyi (strain ATCC 51908 / MS32)</name>
    <dbReference type="NCBI Taxonomy" id="392500"/>
    <lineage>
        <taxon>Bacteria</taxon>
        <taxon>Pseudomonadati</taxon>
        <taxon>Pseudomonadota</taxon>
        <taxon>Gammaproteobacteria</taxon>
        <taxon>Alteromonadales</taxon>
        <taxon>Shewanellaceae</taxon>
        <taxon>Shewanella</taxon>
    </lineage>
</organism>
<dbReference type="EC" id="2.4.2.4" evidence="1"/>
<dbReference type="EMBL" id="CP000961">
    <property type="protein sequence ID" value="ACA87812.1"/>
    <property type="molecule type" value="Genomic_DNA"/>
</dbReference>
<dbReference type="RefSeq" id="WP_012326145.1">
    <property type="nucleotide sequence ID" value="NC_010506.1"/>
</dbReference>
<dbReference type="SMR" id="B1KRP7"/>
<dbReference type="STRING" id="392500.Swoo_3548"/>
<dbReference type="KEGG" id="swd:Swoo_3548"/>
<dbReference type="eggNOG" id="COG0213">
    <property type="taxonomic scope" value="Bacteria"/>
</dbReference>
<dbReference type="HOGENOM" id="CLU_025040_0_1_6"/>
<dbReference type="UniPathway" id="UPA00578">
    <property type="reaction ID" value="UER00638"/>
</dbReference>
<dbReference type="Proteomes" id="UP000002168">
    <property type="component" value="Chromosome"/>
</dbReference>
<dbReference type="GO" id="GO:0005829">
    <property type="term" value="C:cytosol"/>
    <property type="evidence" value="ECO:0007669"/>
    <property type="project" value="TreeGrafter"/>
</dbReference>
<dbReference type="GO" id="GO:0004645">
    <property type="term" value="F:1,4-alpha-oligoglucan phosphorylase activity"/>
    <property type="evidence" value="ECO:0007669"/>
    <property type="project" value="InterPro"/>
</dbReference>
<dbReference type="GO" id="GO:0009032">
    <property type="term" value="F:thymidine phosphorylase activity"/>
    <property type="evidence" value="ECO:0007669"/>
    <property type="project" value="UniProtKB-UniRule"/>
</dbReference>
<dbReference type="GO" id="GO:0006206">
    <property type="term" value="P:pyrimidine nucleobase metabolic process"/>
    <property type="evidence" value="ECO:0007669"/>
    <property type="project" value="InterPro"/>
</dbReference>
<dbReference type="GO" id="GO:0046104">
    <property type="term" value="P:thymidine metabolic process"/>
    <property type="evidence" value="ECO:0007669"/>
    <property type="project" value="UniProtKB-UniRule"/>
</dbReference>
<dbReference type="FunFam" id="3.40.1030.10:FF:000001">
    <property type="entry name" value="Thymidine phosphorylase"/>
    <property type="match status" value="1"/>
</dbReference>
<dbReference type="FunFam" id="3.90.1170.30:FF:000001">
    <property type="entry name" value="Thymidine phosphorylase"/>
    <property type="match status" value="1"/>
</dbReference>
<dbReference type="Gene3D" id="3.40.1030.10">
    <property type="entry name" value="Nucleoside phosphorylase/phosphoribosyltransferase catalytic domain"/>
    <property type="match status" value="1"/>
</dbReference>
<dbReference type="Gene3D" id="3.90.1170.30">
    <property type="entry name" value="Pyrimidine nucleoside phosphorylase-like, C-terminal domain"/>
    <property type="match status" value="1"/>
</dbReference>
<dbReference type="Gene3D" id="1.20.970.10">
    <property type="entry name" value="Transferase, Pyrimidine Nucleoside Phosphorylase, Chain C"/>
    <property type="match status" value="1"/>
</dbReference>
<dbReference type="HAMAP" id="MF_01628">
    <property type="entry name" value="Thymid_phosp"/>
    <property type="match status" value="1"/>
</dbReference>
<dbReference type="InterPro" id="IPR000312">
    <property type="entry name" value="Glycosyl_Trfase_fam3"/>
</dbReference>
<dbReference type="InterPro" id="IPR017459">
    <property type="entry name" value="Glycosyl_Trfase_fam3_N_dom"/>
</dbReference>
<dbReference type="InterPro" id="IPR036320">
    <property type="entry name" value="Glycosyl_Trfase_fam3_N_dom_sf"/>
</dbReference>
<dbReference type="InterPro" id="IPR035902">
    <property type="entry name" value="Nuc_phospho_transferase"/>
</dbReference>
<dbReference type="InterPro" id="IPR036566">
    <property type="entry name" value="PYNP-like_C_sf"/>
</dbReference>
<dbReference type="InterPro" id="IPR013102">
    <property type="entry name" value="PYNP_C"/>
</dbReference>
<dbReference type="InterPro" id="IPR018090">
    <property type="entry name" value="Pyrmidine_PPas_bac/euk"/>
</dbReference>
<dbReference type="InterPro" id="IPR017872">
    <property type="entry name" value="Pyrmidine_PPase_CS"/>
</dbReference>
<dbReference type="InterPro" id="IPR000053">
    <property type="entry name" value="Thymidine/pyrmidine_PPase"/>
</dbReference>
<dbReference type="InterPro" id="IPR013465">
    <property type="entry name" value="Thymidine_Pase"/>
</dbReference>
<dbReference type="NCBIfam" id="NF004490">
    <property type="entry name" value="PRK05820.1"/>
    <property type="match status" value="1"/>
</dbReference>
<dbReference type="NCBIfam" id="TIGR02643">
    <property type="entry name" value="T_phosphoryl"/>
    <property type="match status" value="1"/>
</dbReference>
<dbReference type="NCBIfam" id="TIGR02644">
    <property type="entry name" value="Y_phosphoryl"/>
    <property type="match status" value="1"/>
</dbReference>
<dbReference type="PANTHER" id="PTHR10515">
    <property type="entry name" value="THYMIDINE PHOSPHORYLASE"/>
    <property type="match status" value="1"/>
</dbReference>
<dbReference type="PANTHER" id="PTHR10515:SF0">
    <property type="entry name" value="THYMIDINE PHOSPHORYLASE"/>
    <property type="match status" value="1"/>
</dbReference>
<dbReference type="Pfam" id="PF02885">
    <property type="entry name" value="Glycos_trans_3N"/>
    <property type="match status" value="1"/>
</dbReference>
<dbReference type="Pfam" id="PF00591">
    <property type="entry name" value="Glycos_transf_3"/>
    <property type="match status" value="1"/>
</dbReference>
<dbReference type="Pfam" id="PF07831">
    <property type="entry name" value="PYNP_C"/>
    <property type="match status" value="1"/>
</dbReference>
<dbReference type="PIRSF" id="PIRSF000478">
    <property type="entry name" value="TP_PyNP"/>
    <property type="match status" value="1"/>
</dbReference>
<dbReference type="SMART" id="SM00941">
    <property type="entry name" value="PYNP_C"/>
    <property type="match status" value="1"/>
</dbReference>
<dbReference type="SUPFAM" id="SSF52418">
    <property type="entry name" value="Nucleoside phosphorylase/phosphoribosyltransferase catalytic domain"/>
    <property type="match status" value="1"/>
</dbReference>
<dbReference type="SUPFAM" id="SSF47648">
    <property type="entry name" value="Nucleoside phosphorylase/phosphoribosyltransferase N-terminal domain"/>
    <property type="match status" value="1"/>
</dbReference>
<dbReference type="SUPFAM" id="SSF54680">
    <property type="entry name" value="Pyrimidine nucleoside phosphorylase C-terminal domain"/>
    <property type="match status" value="1"/>
</dbReference>
<dbReference type="PROSITE" id="PS00647">
    <property type="entry name" value="THYMID_PHOSPHORYLASE"/>
    <property type="match status" value="1"/>
</dbReference>
<keyword id="KW-0328">Glycosyltransferase</keyword>
<keyword id="KW-1185">Reference proteome</keyword>
<keyword id="KW-0808">Transferase</keyword>
<feature type="chain" id="PRO_1000186275" description="Thymidine phosphorylase">
    <location>
        <begin position="1"/>
        <end position="443"/>
    </location>
</feature>
<comment type="function">
    <text evidence="1">The enzymes which catalyze the reversible phosphorolysis of pyrimidine nucleosides are involved in the degradation of these compounds and in their utilization as carbon and energy sources, or in the rescue of pyrimidine bases for nucleotide synthesis.</text>
</comment>
<comment type="catalytic activity">
    <reaction evidence="1">
        <text>thymidine + phosphate = 2-deoxy-alpha-D-ribose 1-phosphate + thymine</text>
        <dbReference type="Rhea" id="RHEA:16037"/>
        <dbReference type="ChEBI" id="CHEBI:17748"/>
        <dbReference type="ChEBI" id="CHEBI:17821"/>
        <dbReference type="ChEBI" id="CHEBI:43474"/>
        <dbReference type="ChEBI" id="CHEBI:57259"/>
        <dbReference type="EC" id="2.4.2.4"/>
    </reaction>
</comment>
<comment type="pathway">
    <text evidence="1">Pyrimidine metabolism; dTMP biosynthesis via salvage pathway; dTMP from thymine: step 1/2.</text>
</comment>
<comment type="subunit">
    <text evidence="1">Homodimer.</text>
</comment>
<comment type="similarity">
    <text evidence="1">Belongs to the thymidine/pyrimidine-nucleoside phosphorylase family.</text>
</comment>
<accession>B1KRP7</accession>
<reference key="1">
    <citation type="submission" date="2008-02" db="EMBL/GenBank/DDBJ databases">
        <title>Complete sequence of Shewanella woodyi ATCC 51908.</title>
        <authorList>
            <consortium name="US DOE Joint Genome Institute"/>
            <person name="Copeland A."/>
            <person name="Lucas S."/>
            <person name="Lapidus A."/>
            <person name="Glavina del Rio T."/>
            <person name="Dalin E."/>
            <person name="Tice H."/>
            <person name="Bruce D."/>
            <person name="Goodwin L."/>
            <person name="Pitluck S."/>
            <person name="Sims D."/>
            <person name="Brettin T."/>
            <person name="Detter J.C."/>
            <person name="Han C."/>
            <person name="Kuske C.R."/>
            <person name="Schmutz J."/>
            <person name="Larimer F."/>
            <person name="Land M."/>
            <person name="Hauser L."/>
            <person name="Kyrpides N."/>
            <person name="Lykidis A."/>
            <person name="Zhao J.-S."/>
            <person name="Richardson P."/>
        </authorList>
    </citation>
    <scope>NUCLEOTIDE SEQUENCE [LARGE SCALE GENOMIC DNA]</scope>
    <source>
        <strain>ATCC 51908 / MS32</strain>
    </source>
</reference>
<proteinExistence type="inferred from homology"/>